<accession>P32622</accession>
<accession>D3DLK8</accession>
<proteinExistence type="evidence at protein level"/>
<evidence type="ECO:0000256" key="1">
    <source>
        <dbReference type="SAM" id="MobiDB-lite"/>
    </source>
</evidence>
<evidence type="ECO:0000269" key="2">
    <source>
    </source>
</evidence>
<evidence type="ECO:0000269" key="3">
    <source>
    </source>
</evidence>
<evidence type="ECO:0000269" key="4">
    <source>
    </source>
</evidence>
<evidence type="ECO:0000269" key="5">
    <source>
    </source>
</evidence>
<evidence type="ECO:0000305" key="6"/>
<protein>
    <recommendedName>
        <fullName>ATP-NADH kinase YEF1</fullName>
        <ecNumber>2.7.1.86</ecNumber>
    </recommendedName>
</protein>
<organism>
    <name type="scientific">Saccharomyces cerevisiae (strain ATCC 204508 / S288c)</name>
    <name type="common">Baker's yeast</name>
    <dbReference type="NCBI Taxonomy" id="559292"/>
    <lineage>
        <taxon>Eukaryota</taxon>
        <taxon>Fungi</taxon>
        <taxon>Dikarya</taxon>
        <taxon>Ascomycota</taxon>
        <taxon>Saccharomycotina</taxon>
        <taxon>Saccharomycetes</taxon>
        <taxon>Saccharomycetales</taxon>
        <taxon>Saccharomycetaceae</taxon>
        <taxon>Saccharomyces</taxon>
    </lineage>
</organism>
<name>YEF1_YEAST</name>
<feature type="chain" id="PRO_0000120717" description="ATP-NADH kinase YEF1">
    <location>
        <begin position="1"/>
        <end position="495"/>
    </location>
</feature>
<feature type="region of interest" description="Disordered" evidence="1">
    <location>
        <begin position="442"/>
        <end position="480"/>
    </location>
</feature>
<feature type="compositionally biased region" description="Polar residues" evidence="1">
    <location>
        <begin position="448"/>
        <end position="467"/>
    </location>
</feature>
<sequence>MKTDRLLINASPETCTKGDAEMDTMDTIDRMTSVKVLAEGKVLSNFEEPGLMRCGYHDAKNWVRRLSSETIVGEDTSNLYPFYVDTAYDVRRLRKDLINAKVDLQVENLIIICNINDISTVFLMREVVEWILRNFHSITVYVQDIFKKSTQFAVGDLCKDSNCSKNRVKYWSKEFVKKHDSFFDLMITLGGDGTVLFASSIFTKDVPPIVPFALGSLGFLTNFEFQNFKETLKHILTDEVRINLRMRLQCKLYRRNKPEIDAATGRKICYIDFISEHHVLNEVTIDRGPAPCLSLLELYGNDSLMTKVQGDGLIVATPTGSTAYSLSAGGSLISPSVNAIAVTPICPHTLSFRPIILPDSMELKVRVDMNSRGTSWVNFDGKDRVELKQGDYVVITASPYSVPTIESSASEFFESISKNLNWNDREEQKPFAHILSPKNQEKYRLDSSKNGNDTISNPLESSCISSDAQDEERKSVTETETEIVVERTRQAHFAI</sequence>
<reference key="1">
    <citation type="journal article" date="1997" name="Nature">
        <title>The nucleotide sequence of Saccharomyces cerevisiae chromosome V.</title>
        <authorList>
            <person name="Dietrich F.S."/>
            <person name="Mulligan J.T."/>
            <person name="Hennessy K.M."/>
            <person name="Yelton M.A."/>
            <person name="Allen E."/>
            <person name="Araujo R."/>
            <person name="Aviles E."/>
            <person name="Berno A."/>
            <person name="Brennan T."/>
            <person name="Carpenter J."/>
            <person name="Chen E."/>
            <person name="Cherry J.M."/>
            <person name="Chung E."/>
            <person name="Duncan M."/>
            <person name="Guzman E."/>
            <person name="Hartzell G."/>
            <person name="Hunicke-Smith S."/>
            <person name="Hyman R.W."/>
            <person name="Kayser A."/>
            <person name="Komp C."/>
            <person name="Lashkari D."/>
            <person name="Lew H."/>
            <person name="Lin D."/>
            <person name="Mosedale D."/>
            <person name="Nakahara K."/>
            <person name="Namath A."/>
            <person name="Norgren R."/>
            <person name="Oefner P."/>
            <person name="Oh C."/>
            <person name="Petel F.X."/>
            <person name="Roberts D."/>
            <person name="Sehl P."/>
            <person name="Schramm S."/>
            <person name="Shogren T."/>
            <person name="Smith V."/>
            <person name="Taylor P."/>
            <person name="Wei Y."/>
            <person name="Botstein D."/>
            <person name="Davis R.W."/>
        </authorList>
    </citation>
    <scope>NUCLEOTIDE SEQUENCE [LARGE SCALE GENOMIC DNA]</scope>
    <source>
        <strain>ATCC 204508 / S288c</strain>
    </source>
</reference>
<reference key="2">
    <citation type="journal article" date="2014" name="G3 (Bethesda)">
        <title>The reference genome sequence of Saccharomyces cerevisiae: Then and now.</title>
        <authorList>
            <person name="Engel S.R."/>
            <person name="Dietrich F.S."/>
            <person name="Fisk D.G."/>
            <person name="Binkley G."/>
            <person name="Balakrishnan R."/>
            <person name="Costanzo M.C."/>
            <person name="Dwight S.S."/>
            <person name="Hitz B.C."/>
            <person name="Karra K."/>
            <person name="Nash R.S."/>
            <person name="Weng S."/>
            <person name="Wong E.D."/>
            <person name="Lloyd P."/>
            <person name="Skrzypek M.S."/>
            <person name="Miyasato S.R."/>
            <person name="Simison M."/>
            <person name="Cherry J.M."/>
        </authorList>
    </citation>
    <scope>GENOME REANNOTATION</scope>
    <source>
        <strain>ATCC 204508 / S288c</strain>
    </source>
</reference>
<reference key="3">
    <citation type="journal article" date="2003" name="Nature">
        <title>Global analysis of protein expression in yeast.</title>
        <authorList>
            <person name="Ghaemmaghami S."/>
            <person name="Huh W.-K."/>
            <person name="Bower K."/>
            <person name="Howson R.W."/>
            <person name="Belle A."/>
            <person name="Dephoure N."/>
            <person name="O'Shea E.K."/>
            <person name="Weissman J.S."/>
        </authorList>
    </citation>
    <scope>LEVEL OF PROTEIN EXPRESSION [LARGE SCALE ANALYSIS]</scope>
</reference>
<reference key="4">
    <citation type="journal article" date="2005" name="FEBS J.">
        <title>Identification of ATP-NADH kinase isozymes and their contribution to supply of NADP(H) in Saccharomyces cerevisiae.</title>
        <authorList>
            <person name="Shi F."/>
            <person name="Kawai S."/>
            <person name="Mori S."/>
            <person name="Kono E."/>
            <person name="Murata K."/>
        </authorList>
    </citation>
    <scope>FUNCTION</scope>
    <scope>SUBUNIT</scope>
    <scope>CATALYTIC ACTIVITY</scope>
    <scope>COFACTOR</scope>
    <scope>BIOPHYSICOCHEMICAL PROPERTIES</scope>
</reference>
<reference key="5">
    <citation type="journal article" date="2006" name="J. Biol. Chem.">
        <title>Synthetic lethal and biochemical analyses of NAD and NADH kinases in Saccharomyces cerevisiae establish separation of cellular functions.</title>
        <authorList>
            <person name="Bieganowski P."/>
            <person name="Seidle H.F."/>
            <person name="Wojcik M."/>
            <person name="Brenner C."/>
        </authorList>
    </citation>
    <scope>FUNCTION</scope>
    <scope>CATALYTIC ACTIVITY</scope>
    <scope>BIOPHYSICOCHEMICAL PROPERTIES</scope>
</reference>
<reference key="6">
    <citation type="journal article" date="2009" name="J. Biol. Chem.">
        <title>Two sources of mitochondrial NADPH in the yeast Saccharomyces cerevisiae.</title>
        <authorList>
            <person name="Miyagi H."/>
            <person name="Kawai S."/>
            <person name="Murata K."/>
        </authorList>
    </citation>
    <scope>FUNCTION</scope>
</reference>
<reference key="7">
    <citation type="journal article" date="2009" name="Science">
        <title>Global analysis of Cdk1 substrate phosphorylation sites provides insights into evolution.</title>
        <authorList>
            <person name="Holt L.J."/>
            <person name="Tuch B.B."/>
            <person name="Villen J."/>
            <person name="Johnson A.D."/>
            <person name="Gygi S.P."/>
            <person name="Morgan D.O."/>
        </authorList>
    </citation>
    <scope>IDENTIFICATION BY MASS SPECTROMETRY [LARGE SCALE ANALYSIS]</scope>
</reference>
<dbReference type="EC" id="2.7.1.86"/>
<dbReference type="EMBL" id="U18779">
    <property type="protein sequence ID" value="AAB65001.1"/>
    <property type="molecule type" value="Genomic_DNA"/>
</dbReference>
<dbReference type="EMBL" id="BK006939">
    <property type="protein sequence ID" value="DAA07612.1"/>
    <property type="molecule type" value="Genomic_DNA"/>
</dbReference>
<dbReference type="PIR" id="S30838">
    <property type="entry name" value="S30838"/>
</dbReference>
<dbReference type="RefSeq" id="NP_010873.1">
    <property type="nucleotide sequence ID" value="NM_001178856.1"/>
</dbReference>
<dbReference type="SMR" id="P32622"/>
<dbReference type="BioGRID" id="36688">
    <property type="interactions" value="91"/>
</dbReference>
<dbReference type="DIP" id="DIP-1885N"/>
<dbReference type="FunCoup" id="P32622">
    <property type="interactions" value="296"/>
</dbReference>
<dbReference type="IntAct" id="P32622">
    <property type="interactions" value="8"/>
</dbReference>
<dbReference type="MINT" id="P32622"/>
<dbReference type="STRING" id="4932.YEL041W"/>
<dbReference type="iPTMnet" id="P32622"/>
<dbReference type="PaxDb" id="4932-YEL041W"/>
<dbReference type="PeptideAtlas" id="P32622"/>
<dbReference type="EnsemblFungi" id="YEL041W_mRNA">
    <property type="protein sequence ID" value="YEL041W"/>
    <property type="gene ID" value="YEL041W"/>
</dbReference>
<dbReference type="GeneID" id="856670"/>
<dbReference type="KEGG" id="sce:YEL041W"/>
<dbReference type="AGR" id="SGD:S000000767"/>
<dbReference type="SGD" id="S000000767">
    <property type="gene designation" value="YEF1"/>
</dbReference>
<dbReference type="VEuPathDB" id="FungiDB:YEL041W"/>
<dbReference type="eggNOG" id="KOG2178">
    <property type="taxonomic scope" value="Eukaryota"/>
</dbReference>
<dbReference type="GeneTree" id="ENSGT00940000169386"/>
<dbReference type="HOGENOM" id="CLU_008831_1_2_1"/>
<dbReference type="InParanoid" id="P32622"/>
<dbReference type="OMA" id="QKAFKEW"/>
<dbReference type="OrthoDB" id="24581at2759"/>
<dbReference type="BioCyc" id="MetaCyc:G3O-30162-MONOMER"/>
<dbReference type="BioCyc" id="YEAST:G3O-30162-MONOMER"/>
<dbReference type="BRENDA" id="2.7.1.23">
    <property type="organism ID" value="984"/>
</dbReference>
<dbReference type="BRENDA" id="2.7.1.86">
    <property type="organism ID" value="984"/>
</dbReference>
<dbReference type="BioGRID-ORCS" id="856670">
    <property type="hits" value="0 hits in 10 CRISPR screens"/>
</dbReference>
<dbReference type="PRO" id="PR:P32622"/>
<dbReference type="Proteomes" id="UP000002311">
    <property type="component" value="Chromosome V"/>
</dbReference>
<dbReference type="RNAct" id="P32622">
    <property type="molecule type" value="protein"/>
</dbReference>
<dbReference type="GO" id="GO:0005524">
    <property type="term" value="F:ATP binding"/>
    <property type="evidence" value="ECO:0007669"/>
    <property type="project" value="UniProtKB-KW"/>
</dbReference>
<dbReference type="GO" id="GO:0003951">
    <property type="term" value="F:NAD+ kinase activity"/>
    <property type="evidence" value="ECO:0000314"/>
    <property type="project" value="SGD"/>
</dbReference>
<dbReference type="GO" id="GO:0042736">
    <property type="term" value="F:NADH kinase activity"/>
    <property type="evidence" value="ECO:0000314"/>
    <property type="project" value="SGD"/>
</dbReference>
<dbReference type="GO" id="GO:0019674">
    <property type="term" value="P:NAD metabolic process"/>
    <property type="evidence" value="ECO:0007669"/>
    <property type="project" value="InterPro"/>
</dbReference>
<dbReference type="GO" id="GO:0006741">
    <property type="term" value="P:NADP biosynthetic process"/>
    <property type="evidence" value="ECO:0000314"/>
    <property type="project" value="SGD"/>
</dbReference>
<dbReference type="FunFam" id="2.60.200.30:FF:000005">
    <property type="entry name" value="NAD+ kinase Utr1"/>
    <property type="match status" value="1"/>
</dbReference>
<dbReference type="Gene3D" id="3.40.50.10330">
    <property type="entry name" value="Probable inorganic polyphosphate/atp-NAD kinase, domain 1"/>
    <property type="match status" value="1"/>
</dbReference>
<dbReference type="Gene3D" id="2.60.200.30">
    <property type="entry name" value="Probable inorganic polyphosphate/atp-NAD kinase, domain 2"/>
    <property type="match status" value="1"/>
</dbReference>
<dbReference type="HAMAP" id="MF_00361">
    <property type="entry name" value="NAD_kinase"/>
    <property type="match status" value="1"/>
</dbReference>
<dbReference type="InterPro" id="IPR017438">
    <property type="entry name" value="ATP-NAD_kinase_N"/>
</dbReference>
<dbReference type="InterPro" id="IPR017437">
    <property type="entry name" value="ATP-NAD_kinase_PpnK-typ_C"/>
</dbReference>
<dbReference type="InterPro" id="IPR016064">
    <property type="entry name" value="NAD/diacylglycerol_kinase_sf"/>
</dbReference>
<dbReference type="InterPro" id="IPR002504">
    <property type="entry name" value="NADK"/>
</dbReference>
<dbReference type="PANTHER" id="PTHR20275">
    <property type="entry name" value="NAD KINASE"/>
    <property type="match status" value="1"/>
</dbReference>
<dbReference type="PANTHER" id="PTHR20275:SF0">
    <property type="entry name" value="NAD KINASE"/>
    <property type="match status" value="1"/>
</dbReference>
<dbReference type="Pfam" id="PF01513">
    <property type="entry name" value="NAD_kinase"/>
    <property type="match status" value="1"/>
</dbReference>
<dbReference type="Pfam" id="PF20143">
    <property type="entry name" value="NAD_kinase_C"/>
    <property type="match status" value="1"/>
</dbReference>
<dbReference type="SUPFAM" id="SSF111331">
    <property type="entry name" value="NAD kinase/diacylglycerol kinase-like"/>
    <property type="match status" value="1"/>
</dbReference>
<gene>
    <name type="primary">YEF1</name>
    <name type="ordered locus">YEL041W</name>
    <name type="ORF">SYGP-ORF17</name>
</gene>
<keyword id="KW-0067">ATP-binding</keyword>
<keyword id="KW-0106">Calcium</keyword>
<keyword id="KW-0170">Cobalt</keyword>
<keyword id="KW-0418">Kinase</keyword>
<keyword id="KW-0460">Magnesium</keyword>
<keyword id="KW-0464">Manganese</keyword>
<keyword id="KW-0520">NAD</keyword>
<keyword id="KW-0521">NADP</keyword>
<keyword id="KW-0547">Nucleotide-binding</keyword>
<keyword id="KW-1185">Reference proteome</keyword>
<keyword id="KW-0808">Transferase</keyword>
<comment type="function">
    <text evidence="3 4 5">ATP-NADH kinase with a low phosphorylation activity of both NADH and NAD(+) to produce NADP and NADPH by using ATP. UTR1 is responsible for essentially all of the NAD/NADH kinase activity resident in the cytoplasm, whereas POS5 is responsible for all mitochondrial NAD/NADH kinase activity and consequent mitochondrial genome maintenance. YEF1 can substitute for UTR1 when overexpressed.</text>
</comment>
<comment type="catalytic activity">
    <reaction evidence="3 4">
        <text>NADH + ATP = ADP + NADPH + H(+)</text>
        <dbReference type="Rhea" id="RHEA:12260"/>
        <dbReference type="ChEBI" id="CHEBI:15378"/>
        <dbReference type="ChEBI" id="CHEBI:30616"/>
        <dbReference type="ChEBI" id="CHEBI:57783"/>
        <dbReference type="ChEBI" id="CHEBI:57945"/>
        <dbReference type="ChEBI" id="CHEBI:456216"/>
        <dbReference type="EC" id="2.7.1.86"/>
    </reaction>
</comment>
<comment type="cofactor">
    <cofactor evidence="3">
        <name>Mg(2+)</name>
        <dbReference type="ChEBI" id="CHEBI:18420"/>
    </cofactor>
    <cofactor evidence="3">
        <name>Mn(2+)</name>
        <dbReference type="ChEBI" id="CHEBI:29035"/>
    </cofactor>
    <cofactor evidence="3">
        <name>Co(2+)</name>
        <dbReference type="ChEBI" id="CHEBI:48828"/>
    </cofactor>
    <cofactor evidence="3">
        <name>Ca(2+)</name>
        <dbReference type="ChEBI" id="CHEBI:29108"/>
    </cofactor>
</comment>
<comment type="biophysicochemical properties">
    <kinetics>
        <KM evidence="3 4">1.9 mM for NAD</KM>
        <KM evidence="3 4">2 mM for NADH</KM>
        <KM evidence="3 4">0.17 mM for ATP</KM>
        <Vmax evidence="3 4">3.3 umol/min/mg enzyme for NAD phosphorylation</Vmax>
        <Vmax evidence="3 4">1.2 umol/min/mg enzyme for NADH phosphorylation</Vmax>
    </kinetics>
    <phDependence>
        <text evidence="3 4">Optimum pH is 8.5.</text>
    </phDependence>
    <temperatureDependence>
        <text evidence="3 4">Optimum temperature is 45 degrees Celsius.</text>
    </temperatureDependence>
</comment>
<comment type="subunit">
    <text evidence="3">Homooctamer.</text>
</comment>
<comment type="interaction">
    <interactant intactId="EBI-22350">
        <id>P32622</id>
    </interactant>
    <interactant intactId="EBI-20174">
        <id>P21373</id>
        <label>UTR1</label>
    </interactant>
    <organismsDiffer>false</organismsDiffer>
    <experiments>5</experiments>
</comment>
<comment type="miscellaneous">
    <text evidence="2">Present with 300 molecules/cell in log phase SD medium.</text>
</comment>
<comment type="similarity">
    <text evidence="6">Belongs to the NAD kinase family.</text>
</comment>